<proteinExistence type="inferred from homology"/>
<sequence length="165" mass="18428">MVVAVYPGTFDPLTRGHEDLVRRASSIFDTLVVGVADSRAKKPFFSLEERLKIANEVLGHYPNVKVMGFKGLLKDFVRTNNARVIVRGLRAVSDFEYEFQMAGMNRYLLPDVETMFMTPSDQYQFISGTIVREIAQLGGDVSKFVFPSVEKWLTEKVAAMGGPAA</sequence>
<gene>
    <name evidence="1" type="primary">coaD</name>
    <name type="ordered locus">Bamb_2867</name>
</gene>
<protein>
    <recommendedName>
        <fullName evidence="1">Phosphopantetheine adenylyltransferase</fullName>
        <ecNumber evidence="1">2.7.7.3</ecNumber>
    </recommendedName>
    <alternativeName>
        <fullName evidence="1">Dephospho-CoA pyrophosphorylase</fullName>
    </alternativeName>
    <alternativeName>
        <fullName evidence="1">Pantetheine-phosphate adenylyltransferase</fullName>
        <shortName evidence="1">PPAT</shortName>
    </alternativeName>
</protein>
<organism>
    <name type="scientific">Burkholderia ambifaria (strain ATCC BAA-244 / DSM 16087 / CCUG 44356 / LMG 19182 / AMMD)</name>
    <name type="common">Burkholderia cepacia (strain AMMD)</name>
    <dbReference type="NCBI Taxonomy" id="339670"/>
    <lineage>
        <taxon>Bacteria</taxon>
        <taxon>Pseudomonadati</taxon>
        <taxon>Pseudomonadota</taxon>
        <taxon>Betaproteobacteria</taxon>
        <taxon>Burkholderiales</taxon>
        <taxon>Burkholderiaceae</taxon>
        <taxon>Burkholderia</taxon>
        <taxon>Burkholderia cepacia complex</taxon>
    </lineage>
</organism>
<dbReference type="EC" id="2.7.7.3" evidence="1"/>
<dbReference type="EMBL" id="CP000440">
    <property type="protein sequence ID" value="ABI88423.1"/>
    <property type="molecule type" value="Genomic_DNA"/>
</dbReference>
<dbReference type="RefSeq" id="WP_006398238.1">
    <property type="nucleotide sequence ID" value="NZ_CP009798.1"/>
</dbReference>
<dbReference type="SMR" id="Q0BBQ0"/>
<dbReference type="GeneID" id="98103885"/>
<dbReference type="KEGG" id="bam:Bamb_2867"/>
<dbReference type="PATRIC" id="fig|339670.21.peg.2020"/>
<dbReference type="eggNOG" id="COG0669">
    <property type="taxonomic scope" value="Bacteria"/>
</dbReference>
<dbReference type="UniPathway" id="UPA00241">
    <property type="reaction ID" value="UER00355"/>
</dbReference>
<dbReference type="Proteomes" id="UP000000662">
    <property type="component" value="Chromosome 1"/>
</dbReference>
<dbReference type="GO" id="GO:0005737">
    <property type="term" value="C:cytoplasm"/>
    <property type="evidence" value="ECO:0007669"/>
    <property type="project" value="UniProtKB-SubCell"/>
</dbReference>
<dbReference type="GO" id="GO:0005524">
    <property type="term" value="F:ATP binding"/>
    <property type="evidence" value="ECO:0007669"/>
    <property type="project" value="UniProtKB-KW"/>
</dbReference>
<dbReference type="GO" id="GO:0004595">
    <property type="term" value="F:pantetheine-phosphate adenylyltransferase activity"/>
    <property type="evidence" value="ECO:0007669"/>
    <property type="project" value="UniProtKB-UniRule"/>
</dbReference>
<dbReference type="GO" id="GO:0015937">
    <property type="term" value="P:coenzyme A biosynthetic process"/>
    <property type="evidence" value="ECO:0007669"/>
    <property type="project" value="UniProtKB-UniRule"/>
</dbReference>
<dbReference type="CDD" id="cd02163">
    <property type="entry name" value="PPAT"/>
    <property type="match status" value="1"/>
</dbReference>
<dbReference type="Gene3D" id="3.40.50.620">
    <property type="entry name" value="HUPs"/>
    <property type="match status" value="1"/>
</dbReference>
<dbReference type="HAMAP" id="MF_00151">
    <property type="entry name" value="PPAT_bact"/>
    <property type="match status" value="1"/>
</dbReference>
<dbReference type="InterPro" id="IPR004821">
    <property type="entry name" value="Cyt_trans-like"/>
</dbReference>
<dbReference type="InterPro" id="IPR001980">
    <property type="entry name" value="PPAT"/>
</dbReference>
<dbReference type="InterPro" id="IPR014729">
    <property type="entry name" value="Rossmann-like_a/b/a_fold"/>
</dbReference>
<dbReference type="NCBIfam" id="TIGR01510">
    <property type="entry name" value="coaD_prev_kdtB"/>
    <property type="match status" value="1"/>
</dbReference>
<dbReference type="NCBIfam" id="TIGR00125">
    <property type="entry name" value="cyt_tran_rel"/>
    <property type="match status" value="1"/>
</dbReference>
<dbReference type="PANTHER" id="PTHR21342">
    <property type="entry name" value="PHOSPHOPANTETHEINE ADENYLYLTRANSFERASE"/>
    <property type="match status" value="1"/>
</dbReference>
<dbReference type="PANTHER" id="PTHR21342:SF1">
    <property type="entry name" value="PHOSPHOPANTETHEINE ADENYLYLTRANSFERASE"/>
    <property type="match status" value="1"/>
</dbReference>
<dbReference type="Pfam" id="PF01467">
    <property type="entry name" value="CTP_transf_like"/>
    <property type="match status" value="1"/>
</dbReference>
<dbReference type="PRINTS" id="PR01020">
    <property type="entry name" value="LPSBIOSNTHSS"/>
</dbReference>
<dbReference type="SUPFAM" id="SSF52374">
    <property type="entry name" value="Nucleotidylyl transferase"/>
    <property type="match status" value="1"/>
</dbReference>
<reference key="1">
    <citation type="submission" date="2006-08" db="EMBL/GenBank/DDBJ databases">
        <title>Complete sequence of chromosome 1 of Burkholderia cepacia AMMD.</title>
        <authorList>
            <person name="Copeland A."/>
            <person name="Lucas S."/>
            <person name="Lapidus A."/>
            <person name="Barry K."/>
            <person name="Detter J.C."/>
            <person name="Glavina del Rio T."/>
            <person name="Hammon N."/>
            <person name="Israni S."/>
            <person name="Pitluck S."/>
            <person name="Bruce D."/>
            <person name="Chain P."/>
            <person name="Malfatti S."/>
            <person name="Shin M."/>
            <person name="Vergez L."/>
            <person name="Schmutz J."/>
            <person name="Larimer F."/>
            <person name="Land M."/>
            <person name="Hauser L."/>
            <person name="Kyrpides N."/>
            <person name="Kim E."/>
            <person name="Parke J."/>
            <person name="Coenye T."/>
            <person name="Konstantinidis K."/>
            <person name="Ramette A."/>
            <person name="Tiedje J."/>
            <person name="Richardson P."/>
        </authorList>
    </citation>
    <scope>NUCLEOTIDE SEQUENCE [LARGE SCALE GENOMIC DNA]</scope>
    <source>
        <strain>ATCC BAA-244 / DSM 16087 / CCUG 44356 / LMG 19182 / AMMD</strain>
    </source>
</reference>
<comment type="function">
    <text evidence="1">Reversibly transfers an adenylyl group from ATP to 4'-phosphopantetheine, yielding dephospho-CoA (dPCoA) and pyrophosphate.</text>
</comment>
<comment type="catalytic activity">
    <reaction evidence="1">
        <text>(R)-4'-phosphopantetheine + ATP + H(+) = 3'-dephospho-CoA + diphosphate</text>
        <dbReference type="Rhea" id="RHEA:19801"/>
        <dbReference type="ChEBI" id="CHEBI:15378"/>
        <dbReference type="ChEBI" id="CHEBI:30616"/>
        <dbReference type="ChEBI" id="CHEBI:33019"/>
        <dbReference type="ChEBI" id="CHEBI:57328"/>
        <dbReference type="ChEBI" id="CHEBI:61723"/>
        <dbReference type="EC" id="2.7.7.3"/>
    </reaction>
</comment>
<comment type="cofactor">
    <cofactor evidence="1">
        <name>Mg(2+)</name>
        <dbReference type="ChEBI" id="CHEBI:18420"/>
    </cofactor>
</comment>
<comment type="pathway">
    <text evidence="1">Cofactor biosynthesis; coenzyme A biosynthesis; CoA from (R)-pantothenate: step 4/5.</text>
</comment>
<comment type="subunit">
    <text evidence="1">Homohexamer.</text>
</comment>
<comment type="subcellular location">
    <subcellularLocation>
        <location evidence="1">Cytoplasm</location>
    </subcellularLocation>
</comment>
<comment type="similarity">
    <text evidence="1">Belongs to the bacterial CoaD family.</text>
</comment>
<feature type="chain" id="PRO_1000011105" description="Phosphopantetheine adenylyltransferase">
    <location>
        <begin position="1"/>
        <end position="165"/>
    </location>
</feature>
<feature type="binding site" evidence="1">
    <location>
        <begin position="9"/>
        <end position="10"/>
    </location>
    <ligand>
        <name>ATP</name>
        <dbReference type="ChEBI" id="CHEBI:30616"/>
    </ligand>
</feature>
<feature type="binding site" evidence="1">
    <location>
        <position position="9"/>
    </location>
    <ligand>
        <name>substrate</name>
    </ligand>
</feature>
<feature type="binding site" evidence="1">
    <location>
        <position position="17"/>
    </location>
    <ligand>
        <name>ATP</name>
        <dbReference type="ChEBI" id="CHEBI:30616"/>
    </ligand>
</feature>
<feature type="binding site" evidence="1">
    <location>
        <position position="41"/>
    </location>
    <ligand>
        <name>substrate</name>
    </ligand>
</feature>
<feature type="binding site" evidence="1">
    <location>
        <position position="73"/>
    </location>
    <ligand>
        <name>substrate</name>
    </ligand>
</feature>
<feature type="binding site" evidence="1">
    <location>
        <position position="87"/>
    </location>
    <ligand>
        <name>substrate</name>
    </ligand>
</feature>
<feature type="binding site" evidence="1">
    <location>
        <begin position="88"/>
        <end position="90"/>
    </location>
    <ligand>
        <name>ATP</name>
        <dbReference type="ChEBI" id="CHEBI:30616"/>
    </ligand>
</feature>
<feature type="binding site" evidence="1">
    <location>
        <position position="98"/>
    </location>
    <ligand>
        <name>ATP</name>
        <dbReference type="ChEBI" id="CHEBI:30616"/>
    </ligand>
</feature>
<feature type="binding site" evidence="1">
    <location>
        <begin position="123"/>
        <end position="129"/>
    </location>
    <ligand>
        <name>ATP</name>
        <dbReference type="ChEBI" id="CHEBI:30616"/>
    </ligand>
</feature>
<feature type="site" description="Transition state stabilizer" evidence="1">
    <location>
        <position position="17"/>
    </location>
</feature>
<keyword id="KW-0067">ATP-binding</keyword>
<keyword id="KW-0173">Coenzyme A biosynthesis</keyword>
<keyword id="KW-0963">Cytoplasm</keyword>
<keyword id="KW-0460">Magnesium</keyword>
<keyword id="KW-0547">Nucleotide-binding</keyword>
<keyword id="KW-0548">Nucleotidyltransferase</keyword>
<keyword id="KW-0808">Transferase</keyword>
<evidence type="ECO:0000255" key="1">
    <source>
        <dbReference type="HAMAP-Rule" id="MF_00151"/>
    </source>
</evidence>
<accession>Q0BBQ0</accession>
<name>COAD_BURCM</name>